<comment type="subcellular location">
    <subcellularLocation>
        <location evidence="1">Secreted</location>
    </subcellularLocation>
</comment>
<comment type="tissue specificity">
    <text>Expressed by the venom gland.</text>
</comment>
<comment type="similarity">
    <text evidence="3">Belongs to the short scorpion toxin superfamily.</text>
</comment>
<accession>D9U2B0</accession>
<sequence length="61" mass="6294">MKTVCGVFMVLLALTVLLAYLPGNTVEAGSCSNKNCVSSCQGSGNSSGKCINSKCKCYPRG</sequence>
<evidence type="ECO:0000250" key="1"/>
<evidence type="ECO:0000255" key="2"/>
<evidence type="ECO:0000305" key="3"/>
<proteinExistence type="evidence at transcript level"/>
<name>KTXA_LYCMC</name>
<dbReference type="EMBL" id="EU163857">
    <property type="protein sequence ID" value="ABY26666.1"/>
    <property type="molecule type" value="mRNA"/>
</dbReference>
<dbReference type="SMR" id="D9U2B0"/>
<dbReference type="GO" id="GO:0005576">
    <property type="term" value="C:extracellular region"/>
    <property type="evidence" value="ECO:0007669"/>
    <property type="project" value="UniProtKB-SubCell"/>
</dbReference>
<dbReference type="GO" id="GO:0008200">
    <property type="term" value="F:ion channel inhibitor activity"/>
    <property type="evidence" value="ECO:0007669"/>
    <property type="project" value="InterPro"/>
</dbReference>
<dbReference type="GO" id="GO:0090729">
    <property type="term" value="F:toxin activity"/>
    <property type="evidence" value="ECO:0007669"/>
    <property type="project" value="UniProtKB-KW"/>
</dbReference>
<dbReference type="Gene3D" id="3.30.30.10">
    <property type="entry name" value="Knottin, scorpion toxin-like"/>
    <property type="match status" value="1"/>
</dbReference>
<dbReference type="InterPro" id="IPR036574">
    <property type="entry name" value="Scorpion_toxin-like_sf"/>
</dbReference>
<dbReference type="InterPro" id="IPR001947">
    <property type="entry name" value="Scorpion_toxinS_K_inh"/>
</dbReference>
<dbReference type="Pfam" id="PF00451">
    <property type="entry name" value="Toxin_2"/>
    <property type="match status" value="1"/>
</dbReference>
<dbReference type="SUPFAM" id="SSF57095">
    <property type="entry name" value="Scorpion toxin-like"/>
    <property type="match status" value="1"/>
</dbReference>
<dbReference type="PROSITE" id="PS01138">
    <property type="entry name" value="SCORP_SHORT_TOXIN"/>
    <property type="match status" value="1"/>
</dbReference>
<reference key="1">
    <citation type="journal article" date="2010" name="BMC Genomics">
        <title>Comparative venom gland transcriptome analysis of the scorpion Lychas mucronatus reveals intraspecific toxic gene diversity and new venomous components.</title>
        <authorList>
            <person name="Zhao R."/>
            <person name="Ma Y."/>
            <person name="He Y."/>
            <person name="Di Z."/>
            <person name="Wu Y.-L."/>
            <person name="Cao Z.-J."/>
            <person name="Li W.-X."/>
        </authorList>
    </citation>
    <scope>NUCLEOTIDE SEQUENCE [MRNA]</scope>
    <source>
        <strain>Hainan</strain>
        <tissue>Venom gland</tissue>
    </source>
</reference>
<feature type="signal peptide" evidence="2">
    <location>
        <begin position="1"/>
        <end position="19"/>
    </location>
</feature>
<feature type="chain" id="PRO_0000403833" description="Putative neurotoxin-A">
    <location>
        <begin position="20"/>
        <end position="61"/>
    </location>
</feature>
<feature type="disulfide bond" evidence="1">
    <location>
        <begin position="31"/>
        <end position="50"/>
    </location>
</feature>
<feature type="disulfide bond" evidence="1">
    <location>
        <begin position="36"/>
        <end position="55"/>
    </location>
</feature>
<feature type="disulfide bond" evidence="1">
    <location>
        <begin position="40"/>
        <end position="57"/>
    </location>
</feature>
<protein>
    <recommendedName>
        <fullName>Putative neurotoxin-A</fullName>
    </recommendedName>
    <alternativeName>
        <fullName>KTx11</fullName>
    </alternativeName>
</protein>
<keyword id="KW-1015">Disulfide bond</keyword>
<keyword id="KW-0872">Ion channel impairing toxin</keyword>
<keyword id="KW-0528">Neurotoxin</keyword>
<keyword id="KW-0964">Secreted</keyword>
<keyword id="KW-0732">Signal</keyword>
<keyword id="KW-0800">Toxin</keyword>
<organism>
    <name type="scientific">Lychas mucronatus</name>
    <name type="common">Chinese swimming scorpion</name>
    <dbReference type="NCBI Taxonomy" id="172552"/>
    <lineage>
        <taxon>Eukaryota</taxon>
        <taxon>Metazoa</taxon>
        <taxon>Ecdysozoa</taxon>
        <taxon>Arthropoda</taxon>
        <taxon>Chelicerata</taxon>
        <taxon>Arachnida</taxon>
        <taxon>Scorpiones</taxon>
        <taxon>Buthida</taxon>
        <taxon>Buthoidea</taxon>
        <taxon>Buthidae</taxon>
        <taxon>Lychas</taxon>
    </lineage>
</organism>